<name>SPTN1_RAT</name>
<keyword id="KW-0002">3D-structure</keyword>
<keyword id="KW-0007">Acetylation</keyword>
<keyword id="KW-0117">Actin capping</keyword>
<keyword id="KW-0009">Actin-binding</keyword>
<keyword id="KW-0106">Calcium</keyword>
<keyword id="KW-0112">Calmodulin-binding</keyword>
<keyword id="KW-0963">Cytoplasm</keyword>
<keyword id="KW-0206">Cytoskeleton</keyword>
<keyword id="KW-0903">Direct protein sequencing</keyword>
<keyword id="KW-0479">Metal-binding</keyword>
<keyword id="KW-0597">Phosphoprotein</keyword>
<keyword id="KW-1185">Reference proteome</keyword>
<keyword id="KW-0677">Repeat</keyword>
<keyword id="KW-0728">SH3 domain</keyword>
<dbReference type="EMBL" id="X90845">
    <property type="protein sequence ID" value="CAA62350.1"/>
    <property type="molecule type" value="mRNA"/>
</dbReference>
<dbReference type="EMBL" id="AF084186">
    <property type="protein sequence ID" value="AAC33127.1"/>
    <property type="molecule type" value="mRNA"/>
</dbReference>
<dbReference type="EMBL" id="J04828">
    <property type="protein sequence ID" value="AAA40770.1"/>
    <property type="status" value="ALT_FRAME"/>
    <property type="molecule type" value="mRNA"/>
</dbReference>
<dbReference type="PIR" id="A32612">
    <property type="entry name" value="A32612"/>
</dbReference>
<dbReference type="PIR" id="S61217">
    <property type="entry name" value="S61217"/>
</dbReference>
<dbReference type="RefSeq" id="NP_741984.2">
    <property type="nucleotide sequence ID" value="NM_171983.2"/>
</dbReference>
<dbReference type="PDB" id="3THK">
    <property type="method" value="X-ray"/>
    <property type="resolution" value="1.70 A"/>
    <property type="chains" value="A/B=967-1035"/>
</dbReference>
<dbReference type="PDBsum" id="3THK"/>
<dbReference type="BMRB" id="P16086"/>
<dbReference type="SMR" id="P16086"/>
<dbReference type="BioGRID" id="248986">
    <property type="interactions" value="21"/>
</dbReference>
<dbReference type="CORUM" id="P16086"/>
<dbReference type="FunCoup" id="P16086">
    <property type="interactions" value="3152"/>
</dbReference>
<dbReference type="IntAct" id="P16086">
    <property type="interactions" value="5"/>
</dbReference>
<dbReference type="MINT" id="P16086"/>
<dbReference type="STRING" id="10116.ENSRNOP00000072038"/>
<dbReference type="CarbonylDB" id="P16086"/>
<dbReference type="GlyGen" id="P16086">
    <property type="glycosylation" value="1 site, 1 O-linked glycan (1 site)"/>
</dbReference>
<dbReference type="iPTMnet" id="P16086"/>
<dbReference type="PhosphoSitePlus" id="P16086"/>
<dbReference type="SwissPalm" id="P16086"/>
<dbReference type="jPOST" id="P16086"/>
<dbReference type="PaxDb" id="10116-ENSRNOP00000042382"/>
<dbReference type="GeneID" id="64159"/>
<dbReference type="KEGG" id="rno:64159"/>
<dbReference type="UCSC" id="RGD:621714">
    <property type="organism name" value="rat"/>
</dbReference>
<dbReference type="AGR" id="RGD:621714"/>
<dbReference type="CTD" id="6709"/>
<dbReference type="RGD" id="621714">
    <property type="gene designation" value="Sptan1"/>
</dbReference>
<dbReference type="VEuPathDB" id="HostDB:ENSRNOG00000015396"/>
<dbReference type="eggNOG" id="KOG0040">
    <property type="taxonomic scope" value="Eukaryota"/>
</dbReference>
<dbReference type="InParanoid" id="P16086"/>
<dbReference type="OrthoDB" id="6018565at2759"/>
<dbReference type="PhylomeDB" id="P16086"/>
<dbReference type="Reactome" id="R-RNO-264870">
    <property type="pathway name" value="Caspase-mediated cleavage of cytoskeletal proteins"/>
</dbReference>
<dbReference type="Reactome" id="R-RNO-375165">
    <property type="pathway name" value="NCAM signaling for neurite out-growth"/>
</dbReference>
<dbReference type="Reactome" id="R-RNO-445095">
    <property type="pathway name" value="Interaction between L1 and Ankyrins"/>
</dbReference>
<dbReference type="Reactome" id="R-RNO-5673001">
    <property type="pathway name" value="RAF/MAP kinase cascade"/>
</dbReference>
<dbReference type="Reactome" id="R-RNO-6798695">
    <property type="pathway name" value="Neutrophil degranulation"/>
</dbReference>
<dbReference type="Reactome" id="R-RNO-6807878">
    <property type="pathway name" value="COPI-mediated anterograde transport"/>
</dbReference>
<dbReference type="Reactome" id="R-RNO-9013420">
    <property type="pathway name" value="RHOU GTPase cycle"/>
</dbReference>
<dbReference type="Reactome" id="R-RNO-9013424">
    <property type="pathway name" value="RHOV GTPase cycle"/>
</dbReference>
<dbReference type="EvolutionaryTrace" id="P16086"/>
<dbReference type="PRO" id="PR:P16086"/>
<dbReference type="Proteomes" id="UP000002494">
    <property type="component" value="Chromosome 3"/>
</dbReference>
<dbReference type="Bgee" id="ENSRNOG00000015396">
    <property type="expression patterns" value="Expressed in frontal cortex and 19 other cell types or tissues"/>
</dbReference>
<dbReference type="ExpressionAtlas" id="P16086">
    <property type="expression patterns" value="baseline and differential"/>
</dbReference>
<dbReference type="GO" id="GO:0030054">
    <property type="term" value="C:cell junction"/>
    <property type="evidence" value="ECO:0000318"/>
    <property type="project" value="GO_Central"/>
</dbReference>
<dbReference type="GO" id="GO:0042995">
    <property type="term" value="C:cell projection"/>
    <property type="evidence" value="ECO:0000318"/>
    <property type="project" value="GO_Central"/>
</dbReference>
<dbReference type="GO" id="GO:0030864">
    <property type="term" value="C:cortical actin cytoskeleton"/>
    <property type="evidence" value="ECO:0000318"/>
    <property type="project" value="GO_Central"/>
</dbReference>
<dbReference type="GO" id="GO:0030863">
    <property type="term" value="C:cortical cytoskeleton"/>
    <property type="evidence" value="ECO:0000266"/>
    <property type="project" value="RGD"/>
</dbReference>
<dbReference type="GO" id="GO:0032437">
    <property type="term" value="C:cuticular plate"/>
    <property type="evidence" value="ECO:0000266"/>
    <property type="project" value="RGD"/>
</dbReference>
<dbReference type="GO" id="GO:0005829">
    <property type="term" value="C:cytosol"/>
    <property type="evidence" value="ECO:0000304"/>
    <property type="project" value="Reactome"/>
</dbReference>
<dbReference type="GO" id="GO:0005916">
    <property type="term" value="C:fascia adherens"/>
    <property type="evidence" value="ECO:0000266"/>
    <property type="project" value="RGD"/>
</dbReference>
<dbReference type="GO" id="GO:0098978">
    <property type="term" value="C:glutamatergic synapse"/>
    <property type="evidence" value="ECO:0000314"/>
    <property type="project" value="SynGO"/>
</dbReference>
<dbReference type="GO" id="GO:0016328">
    <property type="term" value="C:lateral plasma membrane"/>
    <property type="evidence" value="ECO:0000266"/>
    <property type="project" value="RGD"/>
</dbReference>
<dbReference type="GO" id="GO:0016020">
    <property type="term" value="C:membrane"/>
    <property type="evidence" value="ECO:0000266"/>
    <property type="project" value="RGD"/>
</dbReference>
<dbReference type="GO" id="GO:0033010">
    <property type="term" value="C:paranodal junction"/>
    <property type="evidence" value="ECO:0000266"/>
    <property type="project" value="RGD"/>
</dbReference>
<dbReference type="GO" id="GO:0033270">
    <property type="term" value="C:paranode region of axon"/>
    <property type="evidence" value="ECO:0000266"/>
    <property type="project" value="RGD"/>
</dbReference>
<dbReference type="GO" id="GO:0005886">
    <property type="term" value="C:plasma membrane"/>
    <property type="evidence" value="ECO:0000314"/>
    <property type="project" value="RGD"/>
</dbReference>
<dbReference type="GO" id="GO:0098794">
    <property type="term" value="C:postsynapse"/>
    <property type="evidence" value="ECO:0000314"/>
    <property type="project" value="SynGO"/>
</dbReference>
<dbReference type="GO" id="GO:0032991">
    <property type="term" value="C:protein-containing complex"/>
    <property type="evidence" value="ECO:0000314"/>
    <property type="project" value="RGD"/>
</dbReference>
<dbReference type="GO" id="GO:0008091">
    <property type="term" value="C:spectrin"/>
    <property type="evidence" value="ECO:0000304"/>
    <property type="project" value="RGD"/>
</dbReference>
<dbReference type="GO" id="GO:0030018">
    <property type="term" value="C:Z disc"/>
    <property type="evidence" value="ECO:0000266"/>
    <property type="project" value="RGD"/>
</dbReference>
<dbReference type="GO" id="GO:0051015">
    <property type="term" value="F:actin filament binding"/>
    <property type="evidence" value="ECO:0000318"/>
    <property type="project" value="GO_Central"/>
</dbReference>
<dbReference type="GO" id="GO:0005509">
    <property type="term" value="F:calcium ion binding"/>
    <property type="evidence" value="ECO:0007669"/>
    <property type="project" value="InterPro"/>
</dbReference>
<dbReference type="GO" id="GO:0005516">
    <property type="term" value="F:calmodulin binding"/>
    <property type="evidence" value="ECO:0007669"/>
    <property type="project" value="UniProtKB-KW"/>
</dbReference>
<dbReference type="GO" id="GO:0044877">
    <property type="term" value="F:protein-containing complex binding"/>
    <property type="evidence" value="ECO:0000353"/>
    <property type="project" value="RGD"/>
</dbReference>
<dbReference type="GO" id="GO:0030507">
    <property type="term" value="F:spectrin binding"/>
    <property type="evidence" value="ECO:0000314"/>
    <property type="project" value="MGI"/>
</dbReference>
<dbReference type="GO" id="GO:0030036">
    <property type="term" value="P:actin cytoskeleton organization"/>
    <property type="evidence" value="ECO:0000318"/>
    <property type="project" value="GO_Central"/>
</dbReference>
<dbReference type="GO" id="GO:0051693">
    <property type="term" value="P:actin filament capping"/>
    <property type="evidence" value="ECO:0007669"/>
    <property type="project" value="UniProtKB-KW"/>
</dbReference>
<dbReference type="CDD" id="cd00051">
    <property type="entry name" value="EFh"/>
    <property type="match status" value="1"/>
</dbReference>
<dbReference type="CDD" id="cd11808">
    <property type="entry name" value="SH3_Alpha_Spectrin"/>
    <property type="match status" value="1"/>
</dbReference>
<dbReference type="CDD" id="cd00176">
    <property type="entry name" value="SPEC"/>
    <property type="match status" value="12"/>
</dbReference>
<dbReference type="FunFam" id="1.20.58.60:FF:000007">
    <property type="entry name" value="Spectrin alpha chain non-erythrocytic 1"/>
    <property type="match status" value="2"/>
</dbReference>
<dbReference type="FunFam" id="1.20.58.60:FF:000037">
    <property type="entry name" value="Spectrin alpha chain non-erythrocytic 1"/>
    <property type="match status" value="1"/>
</dbReference>
<dbReference type="FunFam" id="1.10.238.10:FF:000032">
    <property type="entry name" value="Spectrin alpha chain, non-erythrocytic 1"/>
    <property type="match status" value="1"/>
</dbReference>
<dbReference type="FunFam" id="1.20.5.170:FF:000014">
    <property type="entry name" value="Spectrin alpha chain, non-erythrocytic 1"/>
    <property type="match status" value="1"/>
</dbReference>
<dbReference type="FunFam" id="1.20.58.60:FF:000006">
    <property type="entry name" value="Spectrin alpha chain, non-erythrocytic 1"/>
    <property type="match status" value="3"/>
</dbReference>
<dbReference type="FunFam" id="1.20.58.60:FF:000013">
    <property type="entry name" value="Spectrin alpha chain, non-erythrocytic 1"/>
    <property type="match status" value="2"/>
</dbReference>
<dbReference type="FunFam" id="1.20.58.60:FF:000017">
    <property type="entry name" value="Spectrin alpha chain, non-erythrocytic 1"/>
    <property type="match status" value="1"/>
</dbReference>
<dbReference type="FunFam" id="1.20.58.60:FF:000020">
    <property type="entry name" value="Spectrin alpha chain, non-erythrocytic 1"/>
    <property type="match status" value="1"/>
</dbReference>
<dbReference type="FunFam" id="1.20.58.60:FF:000026">
    <property type="entry name" value="Spectrin alpha chain, non-erythrocytic 1"/>
    <property type="match status" value="2"/>
</dbReference>
<dbReference type="FunFam" id="1.20.58.60:FF:000035">
    <property type="entry name" value="Spectrin alpha chain, non-erythrocytic 1"/>
    <property type="match status" value="1"/>
</dbReference>
<dbReference type="FunFam" id="1.20.58.60:FF:000043">
    <property type="entry name" value="Spectrin alpha chain, non-erythrocytic 1"/>
    <property type="match status" value="1"/>
</dbReference>
<dbReference type="FunFam" id="1.20.58.60:FF:000046">
    <property type="entry name" value="Spectrin alpha chain, non-erythrocytic 1"/>
    <property type="match status" value="1"/>
</dbReference>
<dbReference type="FunFam" id="1.20.58.60:FF:000071">
    <property type="entry name" value="Spectrin alpha chain, non-erythrocytic 1"/>
    <property type="match status" value="1"/>
</dbReference>
<dbReference type="FunFam" id="1.20.58.60:FF:000078">
    <property type="entry name" value="Spectrin alpha chain, non-erythrocytic 1"/>
    <property type="match status" value="1"/>
</dbReference>
<dbReference type="FunFam" id="1.20.58.60:FF:000079">
    <property type="entry name" value="Spectrin alpha chain, non-erythrocytic 1"/>
    <property type="match status" value="1"/>
</dbReference>
<dbReference type="FunFam" id="1.20.58.60:FF:000080">
    <property type="entry name" value="Spectrin alpha chain, non-erythrocytic 1"/>
    <property type="match status" value="1"/>
</dbReference>
<dbReference type="FunFam" id="2.30.30.40:FF:000036">
    <property type="entry name" value="Spectrin alpha chain, non-erythrocytic 1"/>
    <property type="match status" value="1"/>
</dbReference>
<dbReference type="FunFam" id="1.10.238.10:FF:000020">
    <property type="entry name" value="spectrin alpha chain, non-erythrocytic 1"/>
    <property type="match status" value="1"/>
</dbReference>
<dbReference type="FunFam" id="1.20.58.60:FF:000100">
    <property type="entry name" value="spectrin alpha chain, non-erythrocytic 1 isoform X1"/>
    <property type="match status" value="1"/>
</dbReference>
<dbReference type="Gene3D" id="1.20.5.170">
    <property type="match status" value="1"/>
</dbReference>
<dbReference type="Gene3D" id="1.20.58.60">
    <property type="match status" value="20"/>
</dbReference>
<dbReference type="Gene3D" id="1.10.238.10">
    <property type="entry name" value="EF-hand"/>
    <property type="match status" value="2"/>
</dbReference>
<dbReference type="Gene3D" id="2.30.30.40">
    <property type="entry name" value="SH3 Domains"/>
    <property type="match status" value="1"/>
</dbReference>
<dbReference type="InterPro" id="IPR035825">
    <property type="entry name" value="Alpha_Spectrin_SH3"/>
</dbReference>
<dbReference type="InterPro" id="IPR011992">
    <property type="entry name" value="EF-hand-dom_pair"/>
</dbReference>
<dbReference type="InterPro" id="IPR014837">
    <property type="entry name" value="EF-hand_Ca_insen"/>
</dbReference>
<dbReference type="InterPro" id="IPR018247">
    <property type="entry name" value="EF_Hand_1_Ca_BS"/>
</dbReference>
<dbReference type="InterPro" id="IPR002048">
    <property type="entry name" value="EF_hand_dom"/>
</dbReference>
<dbReference type="InterPro" id="IPR036028">
    <property type="entry name" value="SH3-like_dom_sf"/>
</dbReference>
<dbReference type="InterPro" id="IPR001452">
    <property type="entry name" value="SH3_domain"/>
</dbReference>
<dbReference type="InterPro" id="IPR018159">
    <property type="entry name" value="Spectrin/alpha-actinin"/>
</dbReference>
<dbReference type="InterPro" id="IPR002017">
    <property type="entry name" value="Spectrin_repeat"/>
</dbReference>
<dbReference type="PANTHER" id="PTHR11915">
    <property type="entry name" value="SPECTRIN/FILAMIN RELATED CYTOSKELETAL PROTEIN"/>
    <property type="match status" value="1"/>
</dbReference>
<dbReference type="Pfam" id="PF13499">
    <property type="entry name" value="EF-hand_7"/>
    <property type="match status" value="1"/>
</dbReference>
<dbReference type="Pfam" id="PF08726">
    <property type="entry name" value="EFhand_Ca_insen"/>
    <property type="match status" value="1"/>
</dbReference>
<dbReference type="Pfam" id="PF00018">
    <property type="entry name" value="SH3_1"/>
    <property type="match status" value="1"/>
</dbReference>
<dbReference type="Pfam" id="PF00435">
    <property type="entry name" value="Spectrin"/>
    <property type="match status" value="20"/>
</dbReference>
<dbReference type="PRINTS" id="PR00452">
    <property type="entry name" value="SH3DOMAIN"/>
</dbReference>
<dbReference type="PRINTS" id="PR01887">
    <property type="entry name" value="SPECTRNALPHA"/>
</dbReference>
<dbReference type="SMART" id="SM00054">
    <property type="entry name" value="EFh"/>
    <property type="match status" value="2"/>
</dbReference>
<dbReference type="SMART" id="SM01184">
    <property type="entry name" value="efhand_Ca_insen"/>
    <property type="match status" value="1"/>
</dbReference>
<dbReference type="SMART" id="SM00326">
    <property type="entry name" value="SH3"/>
    <property type="match status" value="1"/>
</dbReference>
<dbReference type="SMART" id="SM00150">
    <property type="entry name" value="SPEC"/>
    <property type="match status" value="20"/>
</dbReference>
<dbReference type="SUPFAM" id="SSF47473">
    <property type="entry name" value="EF-hand"/>
    <property type="match status" value="1"/>
</dbReference>
<dbReference type="SUPFAM" id="SSF50044">
    <property type="entry name" value="SH3-domain"/>
    <property type="match status" value="1"/>
</dbReference>
<dbReference type="SUPFAM" id="SSF46966">
    <property type="entry name" value="Spectrin repeat"/>
    <property type="match status" value="14"/>
</dbReference>
<dbReference type="PROSITE" id="PS00018">
    <property type="entry name" value="EF_HAND_1"/>
    <property type="match status" value="2"/>
</dbReference>
<dbReference type="PROSITE" id="PS50222">
    <property type="entry name" value="EF_HAND_2"/>
    <property type="match status" value="3"/>
</dbReference>
<dbReference type="PROSITE" id="PS50002">
    <property type="entry name" value="SH3"/>
    <property type="match status" value="1"/>
</dbReference>
<protein>
    <recommendedName>
        <fullName>Spectrin alpha chain, non-erythrocytic 1</fullName>
    </recommendedName>
    <alternativeName>
        <fullName>Alpha-II spectrin</fullName>
    </alternativeName>
    <alternativeName>
        <fullName>Fodrin alpha chain</fullName>
    </alternativeName>
</protein>
<sequence>MDPSGVKVLETAEDIQERRQQVLDRYHRFKELSTLRRQKLEDSYRFQFFQRDAEELEKWIQEKLQVASDENYKDPTNLQGKLQKHQAFEAEVQANSGAIVKLDETGNLMISEGHFASETIRTRLMELHRQWELLLEKMREKGIKLLQAQKLVQYLRECEDVMDWINDKEAIVTSEELGQDLEHVEVLQKKFEEFQTDLAAHEERVNEVNQFAAKLIQEQHPEEELIKTKQEEVNAAWQRLKGLALQRQGKLFGAAEVQRFNRDVDETIGWIKEKEQLMASDDFGRDLASVQALLRKHEGLERDLAALEDKVKALCAEADRLQQSHPLSANQIQVKREELITNWEQIRTLAAERHARLDDSYRLQRFLADFRDLTSWVTEMKALINADELANDVAGAEALLDRHQEHKGEIDAHEDSFKSADESGQALLAAGHYASDEVREKLSILSEERAALLELWELRRQQYEQCMDLQLFYRDTEQVDNWMSKQEAFLLNEDLGDSLDSVEALLKKHEDFEKSLSAQEEKITALDEFATKLIQNNHYAMEDVATRRDALLSRRNALHERAMHRRAQLADSFHLQQFFRDSDELKSWVNEKMKTATDEAYKDPSNLQGKVQKHQAFEAELSANQSRIDALEKAGQKLIDVNHYAKEEVAARMNEVISLWKKLLEATELKGVKLREANQQQQFNRNVEDIELWLYEVEGHLASDDYGKDLTNVQNLQKKHALLEADVAAHQDRIDGITIQARQFQDAGHFDAENIKKKQEALVARYEALKEPMVARKQKLADSLRLQQLFRDVEDEETWIREKEPIAASTNRGKDLIGVQNLLKKHQALQAEIAGHEPRIKAVTQKGNAMVEEGHFAAEDVKAKLSELNQKWEALKAKASQRRQDLEDSLQAQQYFADANEAESWMREKEPIVGSTDYGKDEDSAEALLKKHEALMSDLSAYGSSIQALREQAQSCRQQVAPMDDETGKELVLALYDYQEKSPREVTMKKGDILTLLNSTNKDWWKVEVNDRQGFVPAAYVKKLDPAQSASRENLLEEQGSIALRQGQIDNQTRITKEAGSVSLRMKQVEELYQSLLELGEKRKGMLEKSCKKFMLFREANELQQWINEKEAALTSEEVGADLEQVEVLQKKFDDFQKDLKANESRLKDINKVAEDLESEGLMAEEVQAVQQQEVYGMMPRDEADSKTASPWKSARLMVHTVATFNSIKELNERWRSLQQLAEERSQLLGSAHEVQRFHRDADETKEWIEEKNQALNTDNYGHDLASVQALQRKHEGFERDLAALGDKVNSLGETAQRLIQSHPESAEDLKEKCTELNQAWTSLGKRADQRKAKLGDSHDLQRFLSDFRDLMSWINGIRGLVSSDELAKDVTGAEALLERHQEHRTEIDARAGTFQAFEQFGQQLLAHGHYASPEIKEKLDILDQERTDLEKAWVQRRMMLDHCLELQLFHRDCEQAENWMAAREAFLNTEDKGDSLDSVEALIKKHEDFDKAINVQEEKIAALQAFADQLIAVDHYAKGDIANRRNEVLDRWRRLKAQMIEKRSKLGESQTLQQFSRDVDEIEAWISEKLQTASDESYKDPTNIQSKHQKHQAFEAELHANADRIRGVIDMGNSLIERGACAGSEDAVKARLAALADQWQFLVQKSAEKSQKLKEANKQQNFNTGIKDFDFWLSEVEALLASEDYGKDLASVNNLLKKHQLLEADISAHEDRLKDLNSQADSLMTSSAFDTSQVKEKRDTINGRFQKIKSMATSRRAKLSESHRLHQFFRDMDDEESWIKEKKLLVSSEDYGRDLTGVQNLRKKHKRLEAELAAHEPAIQGVLDTGKKLSDDNTIGQEEIQQRLAQFVEHWKELKQLAAARGQRLEESLEYQQFVANVEEEEAWINEKMTLVASEDYGDTLAAIQGLLKKHEAFETDFTVHKDRVNDVCTNGQDLIKKNNHHEENISSKMKGLNGKVSDLEKAAAQRKAKLDENSAFLQFNWKADVVESWIGEKENSLKTDDYGRDLSSVQTLLTKQETFDAGLQAFQQEGIANITALKDQLLAAKHIQSKAIEARHASLMKRWTQLLANSATRKKKLLEAQSHFRKVEDLFLTFAKKASAFNSWFENAEEDLTDPVRCNSLEEIKALREAHDAFRSSLSSAQADFNQLAELDRQIKSFRVASNPYTWFTMEALEETWRNLQKIIKERELELQKEQRRQEENDKLRQEFAQHANAFHQWIQETRTYLLDGSCMVEESGTLESQLEATKRKHQEIRAMRSQLKKIEDLGAAMEEALILDNKYTEHSTVGLAQQWDQLDQLGMRMQHNLEQQIQARNTTGVTEEALKEFSMMFKHFDKDKSGRLNHQEFKSCLRSLGYDLPMVEEGEPDPEFEAILDTVDPNRDGHVSLQEYMAFMISRETENVKSSEEIESAFRALSSEGKPYVTKEELYQNLTREQADYCVSHMKPYVDGKGRELPTAFDYVEFTRSLFVN</sequence>
<accession>P16086</accession>
<accession>O88663</accession>
<accession>P70477</accession>
<comment type="function">
    <text evidence="1">Fodrin, which seems to be involved in secretion, interacts with calmodulin in a calcium-dependent manner and is thus candidate for the calcium-dependent movement of the cytoskeleton at the membrane.</text>
</comment>
<comment type="subunit">
    <text evidence="3 7 8 9">Like erythrocyte spectrin, the spectrin-like proteins are capable of forming dimers which can further associate to tetramers. Interacts (via C-terminal spectrin repeats) with TRPC4. Interacts with CALM and EMD. Interacts with isoform 1 of ACP1. Identified in a complex with ACTN4, CASK, IQGAP1, MAGI2, NPHS1 and SPTBN1. Interacts with SHANK3 (via ANK repeats). Interacts with CLN3; this interaction regulates the fodrin localization at the plasma membrane (By similarity).</text>
</comment>
<comment type="subcellular location">
    <subcellularLocation>
        <location evidence="1">Cytoplasm</location>
        <location evidence="1">Cytoskeleton</location>
    </subcellularLocation>
    <subcellularLocation>
        <location evidence="8">Cytoplasm</location>
        <location evidence="8">Cell cortex</location>
    </subcellularLocation>
    <text>Expressed along the cell membrane in podocytes and presumptive tubule cells during glomerulogenesis and is expressed along lateral cell margins in tubule cells.</text>
</comment>
<comment type="tissue specificity">
    <text evidence="8">Expressed in the foot process layer of podocytes in the kidney glomerulus and in tubules (at protein level).</text>
</comment>
<comment type="developmental stage">
    <text evidence="8">Expressed throughout glomerulogenesis.</text>
</comment>
<comment type="PTM">
    <text evidence="7">Phosphorylation of Tyr-1176 decreases sensitivity to cleavage by calpain in vitro.</text>
</comment>
<comment type="similarity">
    <text evidence="10">Belongs to the spectrin family.</text>
</comment>
<comment type="sequence caution" evidence="10">
    <conflict type="frameshift">
        <sequence resource="EMBL-CDS" id="AAA40770"/>
    </conflict>
</comment>
<gene>
    <name type="primary">Sptan1</name>
    <name type="synonym">Spna2</name>
    <name type="synonym">Spta2</name>
</gene>
<proteinExistence type="evidence at protein level"/>
<evidence type="ECO:0000250" key="1"/>
<evidence type="ECO:0000250" key="2">
    <source>
        <dbReference type="UniProtKB" id="P16546"/>
    </source>
</evidence>
<evidence type="ECO:0000250" key="3">
    <source>
        <dbReference type="UniProtKB" id="Q13813"/>
    </source>
</evidence>
<evidence type="ECO:0000255" key="4"/>
<evidence type="ECO:0000255" key="5">
    <source>
        <dbReference type="PROSITE-ProRule" id="PRU00192"/>
    </source>
</evidence>
<evidence type="ECO:0000255" key="6">
    <source>
        <dbReference type="PROSITE-ProRule" id="PRU00448"/>
    </source>
</evidence>
<evidence type="ECO:0000269" key="7">
    <source>
    </source>
</evidence>
<evidence type="ECO:0000269" key="8">
    <source>
    </source>
</evidence>
<evidence type="ECO:0000269" key="9">
    <source>
    </source>
</evidence>
<evidence type="ECO:0000305" key="10"/>
<evidence type="ECO:0007744" key="11">
    <source>
    </source>
</evidence>
<evidence type="ECO:0007744" key="12">
    <source>
    </source>
</evidence>
<evidence type="ECO:0007829" key="13">
    <source>
        <dbReference type="PDB" id="3THK"/>
    </source>
</evidence>
<feature type="chain" id="PRO_0000073457" description="Spectrin alpha chain, non-erythrocytic 1">
    <location>
        <begin position="1"/>
        <end position="2472"/>
    </location>
</feature>
<feature type="repeat" description="Spectrin 1" evidence="4">
    <location>
        <begin position="45"/>
        <end position="146"/>
    </location>
</feature>
<feature type="repeat" description="Spectrin 2" evidence="4">
    <location>
        <begin position="150"/>
        <end position="251"/>
    </location>
</feature>
<feature type="repeat" description="Spectrin 3" evidence="4">
    <location>
        <begin position="256"/>
        <end position="358"/>
    </location>
</feature>
<feature type="repeat" description="Spectrin 4" evidence="4">
    <location>
        <begin position="361"/>
        <end position="465"/>
    </location>
</feature>
<feature type="repeat" description="Spectrin 5" evidence="4">
    <location>
        <begin position="468"/>
        <end position="570"/>
    </location>
</feature>
<feature type="repeat" description="Spectrin 6" evidence="4">
    <location>
        <begin position="574"/>
        <end position="676"/>
    </location>
</feature>
<feature type="repeat" description="Spectrin 7" evidence="4">
    <location>
        <begin position="679"/>
        <end position="781"/>
    </location>
</feature>
<feature type="repeat" description="Spectrin 8" evidence="4">
    <location>
        <begin position="785"/>
        <end position="888"/>
    </location>
</feature>
<feature type="repeat" description="Spectrin 9" evidence="4">
    <location>
        <begin position="891"/>
        <end position="961"/>
    </location>
</feature>
<feature type="domain" description="SH3" evidence="5">
    <location>
        <begin position="967"/>
        <end position="1026"/>
    </location>
</feature>
<feature type="repeat" description="Spectrin 10" evidence="4">
    <location>
        <begin position="1096"/>
        <end position="1166"/>
    </location>
</feature>
<feature type="repeat" description="Spectrin 11" evidence="4">
    <location>
        <begin position="1233"/>
        <end position="1336"/>
    </location>
</feature>
<feature type="repeat" description="Spectrin 12" evidence="4">
    <location>
        <begin position="1339"/>
        <end position="1441"/>
    </location>
</feature>
<feature type="repeat" description="Spectrin 13" evidence="4">
    <location>
        <begin position="1446"/>
        <end position="1549"/>
    </location>
</feature>
<feature type="repeat" description="Spectrin 14" evidence="4">
    <location>
        <begin position="1552"/>
        <end position="1656"/>
    </location>
</feature>
<feature type="repeat" description="Spectrin 15" evidence="4">
    <location>
        <begin position="1659"/>
        <end position="1762"/>
    </location>
</feature>
<feature type="repeat" description="Spectrin 16" evidence="4">
    <location>
        <begin position="1764"/>
        <end position="1868"/>
    </location>
</feature>
<feature type="repeat" description="Spectrin 17" evidence="4">
    <location>
        <begin position="1871"/>
        <end position="1974"/>
    </location>
</feature>
<feature type="repeat" description="Spectrin 18" evidence="4">
    <location>
        <begin position="1978"/>
        <end position="2081"/>
    </location>
</feature>
<feature type="repeat" description="Spectrin 19" evidence="4">
    <location>
        <begin position="2092"/>
        <end position="2194"/>
    </location>
</feature>
<feature type="repeat" description="Spectrin 20" evidence="4">
    <location>
        <begin position="2206"/>
        <end position="2310"/>
    </location>
</feature>
<feature type="domain" description="EF-hand 1" evidence="6">
    <location>
        <begin position="2323"/>
        <end position="2358"/>
    </location>
</feature>
<feature type="domain" description="EF-hand 2" evidence="6">
    <location>
        <begin position="2366"/>
        <end position="2401"/>
    </location>
</feature>
<feature type="domain" description="EF-hand 3" evidence="6">
    <location>
        <begin position="2404"/>
        <end position="2439"/>
    </location>
</feature>
<feature type="binding site" evidence="6">
    <location>
        <position position="2336"/>
    </location>
    <ligand>
        <name>Ca(2+)</name>
        <dbReference type="ChEBI" id="CHEBI:29108"/>
        <label>1</label>
    </ligand>
</feature>
<feature type="binding site" evidence="6">
    <location>
        <position position="2338"/>
    </location>
    <ligand>
        <name>Ca(2+)</name>
        <dbReference type="ChEBI" id="CHEBI:29108"/>
        <label>1</label>
    </ligand>
</feature>
<feature type="binding site" evidence="6">
    <location>
        <position position="2340"/>
    </location>
    <ligand>
        <name>Ca(2+)</name>
        <dbReference type="ChEBI" id="CHEBI:29108"/>
        <label>1</label>
    </ligand>
</feature>
<feature type="binding site" evidence="6">
    <location>
        <position position="2342"/>
    </location>
    <ligand>
        <name>Ca(2+)</name>
        <dbReference type="ChEBI" id="CHEBI:29108"/>
        <label>1</label>
    </ligand>
</feature>
<feature type="binding site" evidence="6">
    <location>
        <position position="2347"/>
    </location>
    <ligand>
        <name>Ca(2+)</name>
        <dbReference type="ChEBI" id="CHEBI:29108"/>
        <label>1</label>
    </ligand>
</feature>
<feature type="binding site" evidence="6">
    <location>
        <position position="2379"/>
    </location>
    <ligand>
        <name>Ca(2+)</name>
        <dbReference type="ChEBI" id="CHEBI:29108"/>
        <label>2</label>
    </ligand>
</feature>
<feature type="binding site" evidence="6">
    <location>
        <position position="2381"/>
    </location>
    <ligand>
        <name>Ca(2+)</name>
        <dbReference type="ChEBI" id="CHEBI:29108"/>
        <label>2</label>
    </ligand>
</feature>
<feature type="binding site" evidence="6">
    <location>
        <position position="2383"/>
    </location>
    <ligand>
        <name>Ca(2+)</name>
        <dbReference type="ChEBI" id="CHEBI:29108"/>
        <label>2</label>
    </ligand>
</feature>
<feature type="binding site" evidence="6">
    <location>
        <position position="2385"/>
    </location>
    <ligand>
        <name>Ca(2+)</name>
        <dbReference type="ChEBI" id="CHEBI:29108"/>
        <label>2</label>
    </ligand>
</feature>
<feature type="binding site" evidence="6">
    <location>
        <position position="2390"/>
    </location>
    <ligand>
        <name>Ca(2+)</name>
        <dbReference type="ChEBI" id="CHEBI:29108"/>
        <label>2</label>
    </ligand>
</feature>
<feature type="site" description="Cleavage; by mu-calpain" evidence="1">
    <location>
        <begin position="1176"/>
        <end position="1177"/>
    </location>
</feature>
<feature type="modified residue" description="N-acetylmethionine" evidence="3">
    <location>
        <position position="1"/>
    </location>
</feature>
<feature type="modified residue" description="Phosphoserine" evidence="2">
    <location>
        <position position="587"/>
    </location>
</feature>
<feature type="modified residue" description="N6-acetyllysine" evidence="3">
    <location>
        <position position="637"/>
    </location>
</feature>
<feature type="modified residue" description="N6-acetyllysine" evidence="2">
    <location>
        <position position="803"/>
    </location>
</feature>
<feature type="modified residue" description="Phosphoserine" evidence="12">
    <location>
        <position position="924"/>
    </location>
</feature>
<feature type="modified residue" description="Phosphoserine" evidence="3">
    <location>
        <position position="982"/>
    </location>
</feature>
<feature type="modified residue" description="Phosphoserine" evidence="3">
    <location>
        <position position="999"/>
    </location>
</feature>
<feature type="modified residue" description="Phosphoserine" evidence="2">
    <location>
        <position position="1029"/>
    </location>
</feature>
<feature type="modified residue" description="Phosphoserine" evidence="12">
    <location>
        <position position="1031"/>
    </location>
</feature>
<feature type="modified residue" description="Phosphoserine" evidence="3">
    <location>
        <position position="1041"/>
    </location>
</feature>
<feature type="modified residue" description="Phosphotyrosine" evidence="7">
    <location>
        <position position="1176"/>
    </location>
</feature>
<feature type="modified residue" description="Phosphoserine" evidence="2">
    <location>
        <position position="1190"/>
    </location>
</feature>
<feature type="modified residue" description="Phosphoserine" evidence="3">
    <location>
        <position position="1207"/>
    </location>
</feature>
<feature type="modified residue" description="Phosphoserine" evidence="11 12">
    <location>
        <position position="1217"/>
    </location>
</feature>
<feature type="modified residue" description="Phosphoserine" evidence="2">
    <location>
        <position position="1291"/>
    </location>
</feature>
<feature type="modified residue" description="Phosphoserine" evidence="12">
    <location>
        <position position="1306"/>
    </location>
</feature>
<feature type="modified residue" description="Phosphoserine" evidence="3">
    <location>
        <position position="1323"/>
    </location>
</feature>
<feature type="modified residue" description="Phosphoserine" evidence="3">
    <location>
        <position position="1338"/>
    </location>
</feature>
<feature type="modified residue" description="N6-acetyllysine" evidence="3">
    <location>
        <position position="1519"/>
    </location>
</feature>
<feature type="modified residue" description="Phosphoserine" evidence="3">
    <location>
        <position position="1550"/>
    </location>
</feature>
<feature type="modified residue" description="Phosphoserine" evidence="3">
    <location>
        <position position="1557"/>
    </location>
</feature>
<feature type="modified residue" description="Phosphoserine" evidence="3">
    <location>
        <position position="1578"/>
    </location>
</feature>
<feature type="modified residue" description="Phosphoserine" evidence="3">
    <location>
        <position position="1615"/>
    </location>
</feature>
<feature type="modified residue" description="Phosphoserine" evidence="3">
    <location>
        <position position="1647"/>
    </location>
</feature>
<feature type="modified residue" description="Phosphothreonine" evidence="3">
    <location>
        <position position="2020"/>
    </location>
</feature>
<feature type="modified residue" description="N6-acetyllysine" evidence="3">
    <location>
        <position position="2052"/>
    </location>
</feature>
<feature type="modified residue" description="Phosphothreonine" evidence="2">
    <location>
        <position position="2066"/>
    </location>
</feature>
<feature type="modified residue" description="N6-acetyllysine" evidence="3">
    <location>
        <position position="2421"/>
    </location>
</feature>
<feature type="mutagenesis site" description="Abolishes interaction with ACP1." evidence="7">
    <original>E</original>
    <variation>A</variation>
    <location>
        <position position="985"/>
    </location>
</feature>
<feature type="mutagenesis site" description="No effect on interaction with ACP1." evidence="7">
    <original>K</original>
    <variation>E</variation>
    <location>
        <position position="1002"/>
    </location>
</feature>
<feature type="mutagenesis site" description="Abolishes interaction with ACP1." evidence="7">
    <original>P</original>
    <variation>L</variation>
    <location>
        <position position="1017"/>
    </location>
</feature>
<feature type="mutagenesis site" description="Abolishes in vitro phosphorylation by Src and Lck." evidence="7">
    <original>Y</original>
    <variation>E</variation>
    <location>
        <position position="1176"/>
    </location>
</feature>
<feature type="sequence conflict" description="In Ref. 3; AAA40770." evidence="10" ref="3">
    <original>D</original>
    <variation>Y</variation>
    <location>
        <position position="1329"/>
    </location>
</feature>
<feature type="sequence conflict" description="In Ref. 1; CAA62350." evidence="10" ref="1">
    <original>V</original>
    <variation>L</variation>
    <location>
        <position position="1514"/>
    </location>
</feature>
<feature type="sequence conflict" description="In Ref. 3; AAA40770." evidence="10" ref="3">
    <original>L</original>
    <variation>A</variation>
    <location>
        <position position="1702"/>
    </location>
</feature>
<feature type="sequence conflict" description="In Ref. 1; CAA62350." evidence="10" ref="1">
    <original>KL</original>
    <variation>NV</variation>
    <location>
        <begin position="1971"/>
        <end position="1972"/>
    </location>
</feature>
<feature type="sequence conflict" description="In Ref. 1; CAA62350." evidence="10" ref="1">
    <original>KL</original>
    <variation>NV</variation>
    <location>
        <begin position="2205"/>
        <end position="2206"/>
    </location>
</feature>
<feature type="strand" evidence="13">
    <location>
        <begin position="971"/>
        <end position="974"/>
    </location>
</feature>
<feature type="strand" evidence="13">
    <location>
        <begin position="993"/>
        <end position="998"/>
    </location>
</feature>
<feature type="strand" evidence="13">
    <location>
        <begin position="1001"/>
        <end position="1009"/>
    </location>
</feature>
<feature type="strand" evidence="13">
    <location>
        <begin position="1012"/>
        <end position="1017"/>
    </location>
</feature>
<feature type="helix" evidence="13">
    <location>
        <begin position="1018"/>
        <end position="1020"/>
    </location>
</feature>
<feature type="strand" evidence="13">
    <location>
        <begin position="1021"/>
        <end position="1023"/>
    </location>
</feature>
<reference key="1">
    <citation type="submission" date="1996-08" db="EMBL/GenBank/DDBJ databases">
        <title>Structural and functional characterization of the calmodulin and calpain binding domains of rat liver alphaII spectrin.</title>
        <authorList>
            <person name="Kalamaraki P."/>
            <person name="Gazzotti P."/>
        </authorList>
    </citation>
    <scope>NUCLEOTIDE SEQUENCE [MRNA]</scope>
    <source>
        <strain>Wistar</strain>
        <tissue>Liver</tissue>
    </source>
</reference>
<reference key="2">
    <citation type="submission" date="1998-08" db="EMBL/GenBank/DDBJ databases">
        <title>Expressional cloning of alpha-fodrin from rat skeletal muscle.</title>
        <authorList>
            <person name="Zhou D."/>
            <person name="Ursitti J.A."/>
            <person name="Porter N.C."/>
            <person name="Randall W.R."/>
            <person name="Bloch R.J."/>
        </authorList>
    </citation>
    <scope>NUCLEOTIDE SEQUENCE [MRNA]</scope>
    <source>
        <tissue>Skeletal muscle</tissue>
    </source>
</reference>
<reference key="3">
    <citation type="journal article" date="1989" name="J. Biol. Chem.">
        <title>Cloning and analysis of cDNA clones for rat kidney alpha-spectrin.</title>
        <authorList>
            <person name="Hong W."/>
            <person name="Doyle D."/>
        </authorList>
    </citation>
    <scope>NUCLEOTIDE SEQUENCE [MRNA] OF 1292-2472</scope>
    <source>
        <tissue>Kidney</tissue>
    </source>
</reference>
<reference key="4">
    <citation type="submission" date="2007-07" db="UniProtKB">
        <authorList>
            <person name="Lubec G."/>
            <person name="Afjehi-Sadat L."/>
            <person name="Kang S.U."/>
        </authorList>
    </citation>
    <scope>PROTEIN SEQUENCE OF 286-295; 1226-1237; 1335-1343; 1370-1380; 1592-1605; 1620-1630; 1689-1698; 1795-1803; 1985-1995; 2316-2326; 2405-2414 AND 2427-2435</scope>
    <scope>IDENTIFICATION BY MASS SPECTROMETRY</scope>
    <source>
        <strain>Sprague-Dawley</strain>
        <tissue>Brain</tissue>
        <tissue>Spinal cord</tissue>
    </source>
</reference>
<reference key="5">
    <citation type="journal article" date="2002" name="Mol. Cell. Biol.">
        <title>Tyrosine phosphorylation regulates alpha II spectrin cleavage by calpain.</title>
        <authorList>
            <person name="Nicolas G."/>
            <person name="Fournier C.M."/>
            <person name="Galand C."/>
            <person name="Malbert-Colas L."/>
            <person name="Bournier O."/>
            <person name="Kroviarski Y."/>
            <person name="Bourgeois M."/>
            <person name="Camonis J.H."/>
            <person name="Dhermy D."/>
            <person name="Grandchamp B."/>
            <person name="Lecomte M.-C."/>
        </authorList>
    </citation>
    <scope>PHOSPHORYLATION AT TYR-1176</scope>
    <scope>MUTAGENESIS OF GLU-985; LYS-1002; PRO-1017 AND TYR-1176</scope>
    <scope>INTERACTION WITH ACP1</scope>
</reference>
<reference key="6">
    <citation type="journal article" date="2005" name="Proc. Natl. Acad. Sci. U.S.A.">
        <title>Cell junction-associated proteins IQGAP1, MAGI-2, CASK, spectrins, and alpha-actinin are components of the nephrin multiprotein complex.</title>
        <authorList>
            <person name="Lehtonen S."/>
            <person name="Ryan J.J."/>
            <person name="Kudlicka K."/>
            <person name="Iino N."/>
            <person name="Zhou H."/>
            <person name="Farquhar M.G."/>
        </authorList>
    </citation>
    <scope>IDENTIFICATION IN A COMPLEX WITH ACTN4; CASK; IQGAP1; MAGI2; NPHS1 AND SPTBN1</scope>
    <scope>IDENTIFICATION BY MASS SPECTROMETRY</scope>
    <scope>SUBCELLULAR LOCATION</scope>
    <scope>TISSUE SPECIFICITY</scope>
    <scope>DEVELOPMENTAL STAGE</scope>
    <source>
        <strain>Sprague-Dawley</strain>
        <tissue>Renal glomerulus</tissue>
    </source>
</reference>
<reference key="7">
    <citation type="journal article" date="2006" name="Proc. Natl. Acad. Sci. U.S.A.">
        <title>Quantitative phosphoproteomics of vasopressin-sensitive renal cells: regulation of aquaporin-2 phosphorylation at two sites.</title>
        <authorList>
            <person name="Hoffert J.D."/>
            <person name="Pisitkun T."/>
            <person name="Wang G."/>
            <person name="Shen R.-F."/>
            <person name="Knepper M.A."/>
        </authorList>
    </citation>
    <scope>PHOSPHORYLATION [LARGE SCALE ANALYSIS] AT SER-1217</scope>
    <scope>IDENTIFICATION BY MASS SPECTROMETRY [LARGE SCALE ANALYSIS]</scope>
</reference>
<reference key="8">
    <citation type="journal article" date="2012" name="Nat. Commun.">
        <title>Quantitative maps of protein phosphorylation sites across 14 different rat organs and tissues.</title>
        <authorList>
            <person name="Lundby A."/>
            <person name="Secher A."/>
            <person name="Lage K."/>
            <person name="Nordsborg N.B."/>
            <person name="Dmytriyev A."/>
            <person name="Lundby C."/>
            <person name="Olsen J.V."/>
        </authorList>
    </citation>
    <scope>PHOSPHORYLATION [LARGE SCALE ANALYSIS] AT SER-924; SER-1031; SER-1217 AND SER-1306</scope>
    <scope>IDENTIFICATION BY MASS SPECTROMETRY [LARGE SCALE ANALYSIS]</scope>
</reference>
<reference key="9">
    <citation type="journal article" date="2013" name="J. Biol. Chem.">
        <title>SHANK3 gene mutations associated with autism facilitate ligand binding to the Shank3 ankyrin repeat region.</title>
        <authorList>
            <person name="Mameza M.G."/>
            <person name="Dvoretskova E."/>
            <person name="Bamann M."/>
            <person name="Hoenck H.H."/>
            <person name="Gueler T."/>
            <person name="Boeckers T.M."/>
            <person name="Schoen M."/>
            <person name="Verpelli C."/>
            <person name="Sala C."/>
            <person name="Barsukov I."/>
            <person name="Dityatev A."/>
            <person name="Kreienkamp H.J."/>
        </authorList>
    </citation>
    <scope>INTERACTION WITH SHANK3</scope>
</reference>
<organism>
    <name type="scientific">Rattus norvegicus</name>
    <name type="common">Rat</name>
    <dbReference type="NCBI Taxonomy" id="10116"/>
    <lineage>
        <taxon>Eukaryota</taxon>
        <taxon>Metazoa</taxon>
        <taxon>Chordata</taxon>
        <taxon>Craniata</taxon>
        <taxon>Vertebrata</taxon>
        <taxon>Euteleostomi</taxon>
        <taxon>Mammalia</taxon>
        <taxon>Eutheria</taxon>
        <taxon>Euarchontoglires</taxon>
        <taxon>Glires</taxon>
        <taxon>Rodentia</taxon>
        <taxon>Myomorpha</taxon>
        <taxon>Muroidea</taxon>
        <taxon>Muridae</taxon>
        <taxon>Murinae</taxon>
        <taxon>Rattus</taxon>
    </lineage>
</organism>